<feature type="chain" id="PRO_1000192440" description="Transcription antitermination protein NusB">
    <location>
        <begin position="1"/>
        <end position="139"/>
    </location>
</feature>
<proteinExistence type="inferred from homology"/>
<reference key="1">
    <citation type="journal article" date="2009" name="J. Bacteriol.">
        <title>Complete genome sequence and comparative genome analysis of enteropathogenic Escherichia coli O127:H6 strain E2348/69.</title>
        <authorList>
            <person name="Iguchi A."/>
            <person name="Thomson N.R."/>
            <person name="Ogura Y."/>
            <person name="Saunders D."/>
            <person name="Ooka T."/>
            <person name="Henderson I.R."/>
            <person name="Harris D."/>
            <person name="Asadulghani M."/>
            <person name="Kurokawa K."/>
            <person name="Dean P."/>
            <person name="Kenny B."/>
            <person name="Quail M.A."/>
            <person name="Thurston S."/>
            <person name="Dougan G."/>
            <person name="Hayashi T."/>
            <person name="Parkhill J."/>
            <person name="Frankel G."/>
        </authorList>
    </citation>
    <scope>NUCLEOTIDE SEQUENCE [LARGE SCALE GENOMIC DNA]</scope>
    <source>
        <strain>E2348/69 / EPEC</strain>
    </source>
</reference>
<name>NUSB_ECO27</name>
<comment type="function">
    <text evidence="1">Involved in transcription antitermination. Required for transcription of ribosomal RNA (rRNA) genes. Binds specifically to the boxA antiterminator sequence of the ribosomal RNA (rrn) operons.</text>
</comment>
<comment type="similarity">
    <text evidence="1">Belongs to the NusB family.</text>
</comment>
<gene>
    <name evidence="1" type="primary">nusB</name>
    <name type="ordered locus">E2348C_0351</name>
</gene>
<protein>
    <recommendedName>
        <fullName evidence="1">Transcription antitermination protein NusB</fullName>
    </recommendedName>
    <alternativeName>
        <fullName evidence="1">Antitermination factor NusB</fullName>
    </alternativeName>
</protein>
<accession>B7UJN9</accession>
<keyword id="KW-1185">Reference proteome</keyword>
<keyword id="KW-0694">RNA-binding</keyword>
<keyword id="KW-0804">Transcription</keyword>
<keyword id="KW-0889">Transcription antitermination</keyword>
<keyword id="KW-0805">Transcription regulation</keyword>
<organism>
    <name type="scientific">Escherichia coli O127:H6 (strain E2348/69 / EPEC)</name>
    <dbReference type="NCBI Taxonomy" id="574521"/>
    <lineage>
        <taxon>Bacteria</taxon>
        <taxon>Pseudomonadati</taxon>
        <taxon>Pseudomonadota</taxon>
        <taxon>Gammaproteobacteria</taxon>
        <taxon>Enterobacterales</taxon>
        <taxon>Enterobacteriaceae</taxon>
        <taxon>Escherichia</taxon>
    </lineage>
</organism>
<dbReference type="EMBL" id="FM180568">
    <property type="protein sequence ID" value="CAS07899.1"/>
    <property type="molecule type" value="Genomic_DNA"/>
</dbReference>
<dbReference type="RefSeq" id="WP_000801125.1">
    <property type="nucleotide sequence ID" value="NC_011601.1"/>
</dbReference>
<dbReference type="SMR" id="B7UJN9"/>
<dbReference type="GeneID" id="93777044"/>
<dbReference type="KEGG" id="ecg:E2348C_0351"/>
<dbReference type="HOGENOM" id="CLU_087843_4_1_6"/>
<dbReference type="Proteomes" id="UP000008205">
    <property type="component" value="Chromosome"/>
</dbReference>
<dbReference type="GO" id="GO:0005829">
    <property type="term" value="C:cytosol"/>
    <property type="evidence" value="ECO:0007669"/>
    <property type="project" value="TreeGrafter"/>
</dbReference>
<dbReference type="GO" id="GO:0003723">
    <property type="term" value="F:RNA binding"/>
    <property type="evidence" value="ECO:0007669"/>
    <property type="project" value="UniProtKB-UniRule"/>
</dbReference>
<dbReference type="GO" id="GO:0006353">
    <property type="term" value="P:DNA-templated transcription termination"/>
    <property type="evidence" value="ECO:0007669"/>
    <property type="project" value="UniProtKB-UniRule"/>
</dbReference>
<dbReference type="GO" id="GO:0031564">
    <property type="term" value="P:transcription antitermination"/>
    <property type="evidence" value="ECO:0007669"/>
    <property type="project" value="UniProtKB-KW"/>
</dbReference>
<dbReference type="CDD" id="cd00619">
    <property type="entry name" value="Terminator_NusB"/>
    <property type="match status" value="1"/>
</dbReference>
<dbReference type="FunFam" id="1.10.940.10:FF:000001">
    <property type="entry name" value="Transcription antitermination factor NusB"/>
    <property type="match status" value="1"/>
</dbReference>
<dbReference type="Gene3D" id="1.10.940.10">
    <property type="entry name" value="NusB-like"/>
    <property type="match status" value="1"/>
</dbReference>
<dbReference type="HAMAP" id="MF_00073">
    <property type="entry name" value="NusB"/>
    <property type="match status" value="1"/>
</dbReference>
<dbReference type="InterPro" id="IPR035926">
    <property type="entry name" value="NusB-like_sf"/>
</dbReference>
<dbReference type="InterPro" id="IPR011605">
    <property type="entry name" value="NusB_fam"/>
</dbReference>
<dbReference type="InterPro" id="IPR006027">
    <property type="entry name" value="NusB_RsmB_TIM44"/>
</dbReference>
<dbReference type="NCBIfam" id="TIGR01951">
    <property type="entry name" value="nusB"/>
    <property type="match status" value="1"/>
</dbReference>
<dbReference type="PANTHER" id="PTHR11078:SF3">
    <property type="entry name" value="ANTITERMINATION NUSB DOMAIN-CONTAINING PROTEIN"/>
    <property type="match status" value="1"/>
</dbReference>
<dbReference type="PANTHER" id="PTHR11078">
    <property type="entry name" value="N UTILIZATION SUBSTANCE PROTEIN B-RELATED"/>
    <property type="match status" value="1"/>
</dbReference>
<dbReference type="Pfam" id="PF01029">
    <property type="entry name" value="NusB"/>
    <property type="match status" value="1"/>
</dbReference>
<dbReference type="SUPFAM" id="SSF48013">
    <property type="entry name" value="NusB-like"/>
    <property type="match status" value="1"/>
</dbReference>
<evidence type="ECO:0000255" key="1">
    <source>
        <dbReference type="HAMAP-Rule" id="MF_00073"/>
    </source>
</evidence>
<sequence>MKPAARRRARECAVQALYSWQLSQNDIADVEYQFLAEQDVKDVDVLYFRELLAGVATNTAYLDGLMKPYLSRLLEELGQVEKAVLRIALYELSKRSDVPYKVAINEAIELAKSFGAEDSHKFVNGVLDKAAPVIRPNKK</sequence>